<reference key="1">
    <citation type="journal article" date="2003" name="Virology">
        <title>Characterization of the low-copy HERV-Fc family: evidence for recent integrations in primates of elements with coding envelope genes.</title>
        <authorList>
            <person name="Benit L."/>
            <person name="Calteau A."/>
            <person name="Heidmann T."/>
        </authorList>
    </citation>
    <scope>NUCLEOTIDE SEQUENCE [GENOMIC DNA]</scope>
</reference>
<comment type="function">
    <text>Retroviral envelope proteins mediate receptor recognition and membrane fusion during early infection. Endogenous envelope proteins may have kept, lost or modified their original function during evolution.</text>
</comment>
<comment type="subcellular location">
    <subcellularLocation>
        <location evidence="3">Cell membrane</location>
        <topology evidence="3">Single-pass membrane protein</topology>
    </subcellularLocation>
    <text>At the origin, this retroviral envelope protein was localized in the virion.</text>
</comment>
<comment type="domain">
    <text evidence="1">The CKS-17 immunosuppressive domain is present in many retroviral envelope proteins. As a synthetic peptide, it inhibits immune function in vitro and in vivo (By similarity).</text>
</comment>
<comment type="PTM">
    <text evidence="1">Specific enzymatic cleavages in vivo yield the mature SU and TM proteins.</text>
</comment>
<comment type="PTM">
    <text evidence="1">The CXXC motif is highly conserved across a broad range of retroviral envelope proteins. It is thought to participate in the formation of a labile disulfide bond possibly with the CX6CC motif present in the transmembrane domain (By similarity).</text>
</comment>
<comment type="miscellaneous">
    <text>This envelope protein is encoded by a baboon specific provirus. It has no ortholog in human.</text>
</comment>
<comment type="similarity">
    <text evidence="3">Belongs to the gamma type-C retroviral envelope protein family. HERV class-I F(c)1 env subfamily.</text>
</comment>
<comment type="caution">
    <text evidence="3">The cleavage site does not match the consensus.</text>
</comment>
<keyword id="KW-1003">Cell membrane</keyword>
<keyword id="KW-1015">Disulfide bond</keyword>
<keyword id="KW-0895">ERV</keyword>
<keyword id="KW-0325">Glycoprotein</keyword>
<keyword id="KW-0472">Membrane</keyword>
<keyword id="KW-1185">Reference proteome</keyword>
<keyword id="KW-0732">Signal</keyword>
<keyword id="KW-0812">Transmembrane</keyword>
<keyword id="KW-1133">Transmembrane helix</keyword>
<keyword id="KW-0814">Transposable element</keyword>
<feature type="signal peptide" evidence="2">
    <location>
        <begin position="1"/>
        <end position="22"/>
    </location>
</feature>
<feature type="chain" id="PRO_0000008438" description="ERV-BabFcenv provirus ancestral Env polyprotein">
    <location>
        <begin position="23"/>
        <end position="579"/>
    </location>
</feature>
<feature type="topological domain" description="Extracellular" evidence="2">
    <location>
        <begin position="23"/>
        <end position="523"/>
    </location>
</feature>
<feature type="transmembrane region" description="Helical" evidence="2">
    <location>
        <begin position="524"/>
        <end position="544"/>
    </location>
</feature>
<feature type="topological domain" description="Cytoplasmic" evidence="2">
    <location>
        <begin position="545"/>
        <end position="579"/>
    </location>
</feature>
<feature type="region of interest" description="Surface protein" evidence="1">
    <location>
        <begin position="23"/>
        <end position="387"/>
    </location>
</feature>
<feature type="region of interest" description="Transmembrane protein" evidence="1">
    <location>
        <begin position="388"/>
        <end position="579"/>
    </location>
</feature>
<feature type="region of interest" description="Fusion peptide" evidence="2">
    <location>
        <begin position="388"/>
        <end position="408"/>
    </location>
</feature>
<feature type="short sequence motif" description="CXXC" evidence="1">
    <location>
        <begin position="255"/>
        <end position="258"/>
    </location>
</feature>
<feature type="short sequence motif" description="CKS-17" evidence="1">
    <location>
        <begin position="453"/>
        <end position="469"/>
    </location>
</feature>
<feature type="short sequence motif" description="CX6CC" evidence="1">
    <location>
        <begin position="470"/>
        <end position="478"/>
    </location>
</feature>
<feature type="site" description="Ancestral cleavage site" evidence="2">
    <location>
        <begin position="387"/>
        <end position="388"/>
    </location>
</feature>
<feature type="glycosylation site" description="N-linked (GlcNAc...) asparagine" evidence="2">
    <location>
        <position position="135"/>
    </location>
</feature>
<feature type="glycosylation site" description="N-linked (GlcNAc...) asparagine" evidence="2">
    <location>
        <position position="203"/>
    </location>
</feature>
<feature type="glycosylation site" description="N-linked (GlcNAc...) asparagine" evidence="2">
    <location>
        <position position="242"/>
    </location>
</feature>
<feature type="glycosylation site" description="N-linked (GlcNAc...) asparagine" evidence="2">
    <location>
        <position position="251"/>
    </location>
</feature>
<feature type="glycosylation site" description="N-linked (GlcNAc...) asparagine" evidence="2">
    <location>
        <position position="276"/>
    </location>
</feature>
<feature type="glycosylation site" description="N-linked (GlcNAc...) asparagine" evidence="2">
    <location>
        <position position="312"/>
    </location>
</feature>
<feature type="glycosylation site" description="N-linked (GlcNAc...) asparagine" evidence="2">
    <location>
        <position position="337"/>
    </location>
</feature>
<feature type="glycosylation site" description="N-linked (GlcNAc...) asparagine" evidence="2">
    <location>
        <position position="482"/>
    </location>
</feature>
<feature type="disulfide bond" evidence="1">
    <location>
        <begin position="470"/>
        <end position="477"/>
    </location>
</feature>
<dbReference type="EMBL" id="AC091754">
    <property type="status" value="NOT_ANNOTATED_CDS"/>
    <property type="molecule type" value="Genomic_DNA"/>
</dbReference>
<dbReference type="SMR" id="P61552"/>
<dbReference type="Proteomes" id="UP000028761">
    <property type="component" value="Unplaced"/>
</dbReference>
<dbReference type="GO" id="GO:0005886">
    <property type="term" value="C:plasma membrane"/>
    <property type="evidence" value="ECO:0007669"/>
    <property type="project" value="UniProtKB-SubCell"/>
</dbReference>
<dbReference type="CDD" id="cd09851">
    <property type="entry name" value="HTLV-1-like_HR1-HR2"/>
    <property type="match status" value="1"/>
</dbReference>
<dbReference type="Gene3D" id="1.10.287.210">
    <property type="match status" value="1"/>
</dbReference>
<dbReference type="InterPro" id="IPR018154">
    <property type="entry name" value="TLV/ENV_coat_polyprotein"/>
</dbReference>
<dbReference type="PANTHER" id="PTHR10424:SF73">
    <property type="entry name" value="ENDOGENOUS RETROVIRUS GROUP FC1 ENV POLYPROTEIN-RELATED"/>
    <property type="match status" value="1"/>
</dbReference>
<dbReference type="PANTHER" id="PTHR10424">
    <property type="entry name" value="VIRAL ENVELOPE PROTEIN"/>
    <property type="match status" value="1"/>
</dbReference>
<dbReference type="Pfam" id="PF00429">
    <property type="entry name" value="TLV_coat"/>
    <property type="match status" value="1"/>
</dbReference>
<dbReference type="SUPFAM" id="SSF58069">
    <property type="entry name" value="Virus ectodomain"/>
    <property type="match status" value="1"/>
</dbReference>
<protein>
    <recommendedName>
        <fullName>ERV-BabFcenv provirus ancestral Env polyprotein</fullName>
    </recommendedName>
    <alternativeName>
        <fullName>BabFcenv</fullName>
    </alternativeName>
    <alternativeName>
        <fullName>Envelope polyprotein</fullName>
    </alternativeName>
    <domain>
        <recommendedName>
            <fullName>Surface protein</fullName>
            <shortName>SU</shortName>
        </recommendedName>
    </domain>
    <domain>
        <recommendedName>
            <fullName>Transmembrane protein</fullName>
            <shortName>TM</shortName>
        </recommendedName>
    </domain>
</protein>
<organism>
    <name type="scientific">Papio anubis</name>
    <name type="common">Olive baboon</name>
    <dbReference type="NCBI Taxonomy" id="9555"/>
    <lineage>
        <taxon>Eukaryota</taxon>
        <taxon>Metazoa</taxon>
        <taxon>Chordata</taxon>
        <taxon>Craniata</taxon>
        <taxon>Vertebrata</taxon>
        <taxon>Euteleostomi</taxon>
        <taxon>Mammalia</taxon>
        <taxon>Eutheria</taxon>
        <taxon>Euarchontoglires</taxon>
        <taxon>Primates</taxon>
        <taxon>Haplorrhini</taxon>
        <taxon>Catarrhini</taxon>
        <taxon>Cercopithecidae</taxon>
        <taxon>Cercopithecinae</taxon>
        <taxon>Papio</taxon>
    </lineage>
</organism>
<evidence type="ECO:0000250" key="1"/>
<evidence type="ECO:0000255" key="2"/>
<evidence type="ECO:0000305" key="3"/>
<proteinExistence type="inferred from homology"/>
<accession>P61552</accession>
<name>EFCB_PAPAN</name>
<sequence>MISAVLNLPSTPLLPLLWFTLIIPASLTNPKFVWRFSITETWSTGNQAHSQTQGTADCSPQGCQDALLLNFHLSSVGNYDHPVICFLYDQTEYNCKNYWQETNLGCPYNYCNMHEIGLMCANGICTPNDRPFVRNRTSGGYILTIKDPWDPRWAQGVKGGLYATSWSSYPTATLQIKRVYVQQVPAPKSKQVDPPKSVQALQNLTSVVKSHEQKIQKLLSPPNSPNNEDPFSWLTLIRQGLNLTQAAGVRNLSHCFLCAALGKAPLVAVPLPTAFNITTDSTSSSQATSLPQVPLYRNPQSQTLPFCYSTPNSSWCDRTQAPSRTQTAPVGGYFWCNQTLSKTLNHASITQSLCVPVSLVPSLTLYSEGELAELASQLSSSNNIQKQAVFLPLIIGVSLASSLVASGLGTGALTHSIQSTQTLSTQVQAAIEASAESLASLQRQITSVAQVAAQNRRALDLLTAEKGGTCLFLGEECCYYVNESGLVDTNVKTLNKIKKELQQFNAPLTPGPPVWLLPVVQQMLPFLIPILILCLMLCLAPILIKFLRARVQEITRVTFNQMLLHPYTQLPTSDPNYAP</sequence>